<reference key="1">
    <citation type="journal article" date="2003" name="J. Bacteriol.">
        <title>Complete genome sequence of the ammonia-oxidizing bacterium and obligate chemolithoautotroph Nitrosomonas europaea.</title>
        <authorList>
            <person name="Chain P."/>
            <person name="Lamerdin J.E."/>
            <person name="Larimer F.W."/>
            <person name="Regala W."/>
            <person name="Lao V."/>
            <person name="Land M.L."/>
            <person name="Hauser L."/>
            <person name="Hooper A.B."/>
            <person name="Klotz M.G."/>
            <person name="Norton J."/>
            <person name="Sayavedra-Soto L.A."/>
            <person name="Arciero D.M."/>
            <person name="Hommes N.G."/>
            <person name="Whittaker M.M."/>
            <person name="Arp D.J."/>
        </authorList>
    </citation>
    <scope>NUCLEOTIDE SEQUENCE [LARGE SCALE GENOMIC DNA]</scope>
    <source>
        <strain>ATCC 19718 / CIP 103999 / KCTC 2705 / NBRC 14298</strain>
    </source>
</reference>
<sequence length="84" mass="9378">MGVKGQLLQDPFLNILRKERIPVSIYLVNGIKLQGQIDSFDQYVVLLKNSVTQMVYKHAISTIVPAKAISIPIPADTQTEQDEP</sequence>
<dbReference type="EMBL" id="AL954747">
    <property type="protein sequence ID" value="CAD85198.1"/>
    <property type="molecule type" value="Genomic_DNA"/>
</dbReference>
<dbReference type="RefSeq" id="WP_011111865.1">
    <property type="nucleotide sequence ID" value="NC_004757.1"/>
</dbReference>
<dbReference type="SMR" id="Q82V23"/>
<dbReference type="STRING" id="228410.NE1287"/>
<dbReference type="GeneID" id="87104462"/>
<dbReference type="KEGG" id="neu:NE1287"/>
<dbReference type="eggNOG" id="COG1923">
    <property type="taxonomic scope" value="Bacteria"/>
</dbReference>
<dbReference type="HOGENOM" id="CLU_113688_2_2_4"/>
<dbReference type="OrthoDB" id="9799751at2"/>
<dbReference type="PhylomeDB" id="Q82V23"/>
<dbReference type="Proteomes" id="UP000001416">
    <property type="component" value="Chromosome"/>
</dbReference>
<dbReference type="GO" id="GO:0005829">
    <property type="term" value="C:cytosol"/>
    <property type="evidence" value="ECO:0007669"/>
    <property type="project" value="TreeGrafter"/>
</dbReference>
<dbReference type="GO" id="GO:0003723">
    <property type="term" value="F:RNA binding"/>
    <property type="evidence" value="ECO:0007669"/>
    <property type="project" value="UniProtKB-UniRule"/>
</dbReference>
<dbReference type="GO" id="GO:0006355">
    <property type="term" value="P:regulation of DNA-templated transcription"/>
    <property type="evidence" value="ECO:0007669"/>
    <property type="project" value="InterPro"/>
</dbReference>
<dbReference type="GO" id="GO:0043487">
    <property type="term" value="P:regulation of RNA stability"/>
    <property type="evidence" value="ECO:0007669"/>
    <property type="project" value="TreeGrafter"/>
</dbReference>
<dbReference type="GO" id="GO:0045974">
    <property type="term" value="P:regulation of translation, ncRNA-mediated"/>
    <property type="evidence" value="ECO:0007669"/>
    <property type="project" value="TreeGrafter"/>
</dbReference>
<dbReference type="CDD" id="cd01716">
    <property type="entry name" value="Hfq"/>
    <property type="match status" value="1"/>
</dbReference>
<dbReference type="FunFam" id="2.30.30.100:FF:000001">
    <property type="entry name" value="RNA-binding protein Hfq"/>
    <property type="match status" value="1"/>
</dbReference>
<dbReference type="Gene3D" id="2.30.30.100">
    <property type="match status" value="1"/>
</dbReference>
<dbReference type="HAMAP" id="MF_00436">
    <property type="entry name" value="Hfq"/>
    <property type="match status" value="1"/>
</dbReference>
<dbReference type="InterPro" id="IPR005001">
    <property type="entry name" value="Hfq"/>
</dbReference>
<dbReference type="InterPro" id="IPR010920">
    <property type="entry name" value="LSM_dom_sf"/>
</dbReference>
<dbReference type="InterPro" id="IPR047575">
    <property type="entry name" value="Sm"/>
</dbReference>
<dbReference type="NCBIfam" id="TIGR02383">
    <property type="entry name" value="Hfq"/>
    <property type="match status" value="1"/>
</dbReference>
<dbReference type="NCBIfam" id="NF001602">
    <property type="entry name" value="PRK00395.1"/>
    <property type="match status" value="1"/>
</dbReference>
<dbReference type="PANTHER" id="PTHR34772">
    <property type="entry name" value="RNA-BINDING PROTEIN HFQ"/>
    <property type="match status" value="1"/>
</dbReference>
<dbReference type="PANTHER" id="PTHR34772:SF1">
    <property type="entry name" value="RNA-BINDING PROTEIN HFQ"/>
    <property type="match status" value="1"/>
</dbReference>
<dbReference type="Pfam" id="PF17209">
    <property type="entry name" value="Hfq"/>
    <property type="match status" value="1"/>
</dbReference>
<dbReference type="SUPFAM" id="SSF50182">
    <property type="entry name" value="Sm-like ribonucleoproteins"/>
    <property type="match status" value="1"/>
</dbReference>
<dbReference type="PROSITE" id="PS52002">
    <property type="entry name" value="SM"/>
    <property type="match status" value="1"/>
</dbReference>
<evidence type="ECO:0000255" key="1">
    <source>
        <dbReference type="HAMAP-Rule" id="MF_00436"/>
    </source>
</evidence>
<evidence type="ECO:0000255" key="2">
    <source>
        <dbReference type="PROSITE-ProRule" id="PRU01346"/>
    </source>
</evidence>
<protein>
    <recommendedName>
        <fullName evidence="1">RNA-binding protein Hfq</fullName>
    </recommendedName>
</protein>
<keyword id="KW-1185">Reference proteome</keyword>
<keyword id="KW-0694">RNA-binding</keyword>
<keyword id="KW-0346">Stress response</keyword>
<feature type="chain" id="PRO_0000095653" description="RNA-binding protein Hfq">
    <location>
        <begin position="1"/>
        <end position="84"/>
    </location>
</feature>
<feature type="domain" description="Sm" evidence="2">
    <location>
        <begin position="10"/>
        <end position="69"/>
    </location>
</feature>
<organism>
    <name type="scientific">Nitrosomonas europaea (strain ATCC 19718 / CIP 103999 / KCTC 2705 / NBRC 14298)</name>
    <dbReference type="NCBI Taxonomy" id="228410"/>
    <lineage>
        <taxon>Bacteria</taxon>
        <taxon>Pseudomonadati</taxon>
        <taxon>Pseudomonadota</taxon>
        <taxon>Betaproteobacteria</taxon>
        <taxon>Nitrosomonadales</taxon>
        <taxon>Nitrosomonadaceae</taxon>
        <taxon>Nitrosomonas</taxon>
    </lineage>
</organism>
<comment type="function">
    <text evidence="1">RNA chaperone that binds small regulatory RNA (sRNAs) and mRNAs to facilitate mRNA translational regulation in response to envelope stress, environmental stress and changes in metabolite concentrations. Also binds with high specificity to tRNAs.</text>
</comment>
<comment type="subunit">
    <text evidence="1">Homohexamer.</text>
</comment>
<comment type="similarity">
    <text evidence="1">Belongs to the Hfq family.</text>
</comment>
<proteinExistence type="inferred from homology"/>
<gene>
    <name evidence="1" type="primary">hfq</name>
    <name type="ordered locus">NE1287</name>
</gene>
<name>HFQ_NITEU</name>
<accession>Q82V23</accession>